<sequence>MGTDLWVGTWRPHRPRGPIAAFYSSPGPKYSLPGNTGFVSHDPSRHRAPAYSMGNRRFKLVDDCSPGPGYLVPSNITVKGKDGTPAYSIYGRPRDISSFRTPGPGSYSPERAGKSAYRSAPTYSLGERTKTFGNDQTPGPAAYMLPSVIGPRIVNRSSAPNYSMTGRSKIGSFHEDLQKTPGPGTYRVIDPGTYKHKPPQYSMTARNVLPGDTTIKPGPGAYSPEKVVMSKAQAPNFSFGIRHSEYVAPLIVDVAD</sequence>
<feature type="chain" id="PRO_0000299467" description="Ciliary microtubule associated protein 1A">
    <location>
        <begin position="1"/>
        <end position="256"/>
    </location>
</feature>
<feature type="repeat" description="STPGR 1">
    <location>
        <begin position="66"/>
        <end position="92"/>
    </location>
</feature>
<feature type="repeat" description="STPGR 2">
    <location>
        <begin position="181"/>
        <end position="206"/>
    </location>
</feature>
<feature type="repeat" description="STPGR 3">
    <location>
        <begin position="217"/>
        <end position="242"/>
    </location>
</feature>
<feature type="region of interest" description="Disordered" evidence="2">
    <location>
        <begin position="91"/>
        <end position="115"/>
    </location>
</feature>
<gene>
    <name type="primary">cimap1a</name>
    <name type="synonym">odf3</name>
</gene>
<organism>
    <name type="scientific">Xenopus laevis</name>
    <name type="common">African clawed frog</name>
    <dbReference type="NCBI Taxonomy" id="8355"/>
    <lineage>
        <taxon>Eukaryota</taxon>
        <taxon>Metazoa</taxon>
        <taxon>Chordata</taxon>
        <taxon>Craniata</taxon>
        <taxon>Vertebrata</taxon>
        <taxon>Euteleostomi</taxon>
        <taxon>Amphibia</taxon>
        <taxon>Batrachia</taxon>
        <taxon>Anura</taxon>
        <taxon>Pipoidea</taxon>
        <taxon>Pipidae</taxon>
        <taxon>Xenopodinae</taxon>
        <taxon>Xenopus</taxon>
        <taxon>Xenopus</taxon>
    </lineage>
</organism>
<keyword id="KW-0966">Cell projection</keyword>
<keyword id="KW-0969">Cilium</keyword>
<keyword id="KW-0963">Cytoplasm</keyword>
<keyword id="KW-0206">Cytoskeleton</keyword>
<keyword id="KW-0282">Flagellum</keyword>
<keyword id="KW-1185">Reference proteome</keyword>
<keyword id="KW-0677">Repeat</keyword>
<reference key="1">
    <citation type="submission" date="2002-12" db="EMBL/GenBank/DDBJ databases">
        <authorList>
            <consortium name="NIH - Xenopus Gene Collection (XGC) project"/>
        </authorList>
    </citation>
    <scope>NUCLEOTIDE SEQUENCE [LARGE SCALE MRNA]</scope>
    <source>
        <tissue>Embryo</tissue>
    </source>
</reference>
<comment type="function">
    <text evidence="1">Outer dense fibers are filamentous structures located on the outside of the axoneme in the midpiece and principal piece of the mammalian sperm tail. May help to maintain the passive elastic structures and elastic recoil of the sperm tail.</text>
</comment>
<comment type="subcellular location">
    <subcellularLocation>
        <location evidence="1">Cytoplasm</location>
    </subcellularLocation>
    <subcellularLocation>
        <location evidence="1">Cytoplasm</location>
        <location evidence="1">Cytoskeleton</location>
        <location evidence="1">Flagellum axoneme</location>
    </subcellularLocation>
    <text evidence="1">Expressed in the cytoplasmic lobe of spermatids.</text>
</comment>
<comment type="miscellaneous">
    <text evidence="1">'Shippo' is a Japanese word for tail.</text>
</comment>
<comment type="similarity">
    <text evidence="3">Belongs to the CIMAP family.</text>
</comment>
<accession>Q8AVY1</accession>
<dbReference type="EMBL" id="BC041210">
    <property type="protein sequence ID" value="AAH41210.1"/>
    <property type="molecule type" value="mRNA"/>
</dbReference>
<dbReference type="RefSeq" id="NP_001079370.1">
    <property type="nucleotide sequence ID" value="NM_001085901.1"/>
</dbReference>
<dbReference type="DNASU" id="379057"/>
<dbReference type="GeneID" id="379057"/>
<dbReference type="KEGG" id="xla:379057"/>
<dbReference type="AGR" id="Xenbase:XB-GENE-6079195"/>
<dbReference type="CTD" id="379057"/>
<dbReference type="Xenbase" id="XB-GENE-6079195">
    <property type="gene designation" value="cimap1a.L"/>
</dbReference>
<dbReference type="OMA" id="KWIYRSA"/>
<dbReference type="OrthoDB" id="429991at2759"/>
<dbReference type="Proteomes" id="UP000186698">
    <property type="component" value="Chromosome 3L"/>
</dbReference>
<dbReference type="Bgee" id="379057">
    <property type="expression patterns" value="Expressed in testis and 16 other cell types or tissues"/>
</dbReference>
<dbReference type="GO" id="GO:0005737">
    <property type="term" value="C:cytoplasm"/>
    <property type="evidence" value="ECO:0007669"/>
    <property type="project" value="UniProtKB-SubCell"/>
</dbReference>
<dbReference type="GO" id="GO:0005856">
    <property type="term" value="C:cytoskeleton"/>
    <property type="evidence" value="ECO:0000318"/>
    <property type="project" value="GO_Central"/>
</dbReference>
<dbReference type="GO" id="GO:0031514">
    <property type="term" value="C:motile cilium"/>
    <property type="evidence" value="ECO:0007669"/>
    <property type="project" value="UniProtKB-KW"/>
</dbReference>
<dbReference type="InterPro" id="IPR051291">
    <property type="entry name" value="CIMAP"/>
</dbReference>
<dbReference type="InterPro" id="IPR010736">
    <property type="entry name" value="SHIPPO-rpt"/>
</dbReference>
<dbReference type="PANTHER" id="PTHR21580:SF28">
    <property type="entry name" value="BOREALIN N-TERMINAL DOMAIN-CONTAINING PROTEIN-RELATED"/>
    <property type="match status" value="1"/>
</dbReference>
<dbReference type="PANTHER" id="PTHR21580">
    <property type="entry name" value="SHIPPO-1-RELATED"/>
    <property type="match status" value="1"/>
</dbReference>
<dbReference type="Pfam" id="PF07004">
    <property type="entry name" value="SHIPPO-rpt"/>
    <property type="match status" value="6"/>
</dbReference>
<proteinExistence type="evidence at transcript level"/>
<name>CMA1A_XENLA</name>
<evidence type="ECO:0000250" key="1">
    <source>
        <dbReference type="UniProtKB" id="Q920N1"/>
    </source>
</evidence>
<evidence type="ECO:0000256" key="2">
    <source>
        <dbReference type="SAM" id="MobiDB-lite"/>
    </source>
</evidence>
<evidence type="ECO:0000305" key="3"/>
<protein>
    <recommendedName>
        <fullName>Ciliary microtubule associated protein 1A</fullName>
    </recommendedName>
    <alternativeName>
        <fullName>Outer dense fiber of sperm tails protein 3</fullName>
    </alternativeName>
    <alternativeName>
        <fullName>Outer dense fiber protein 3</fullName>
    </alternativeName>
</protein>